<keyword id="KW-0963">Cytoplasm</keyword>
<keyword id="KW-0312">Gluconeogenesis</keyword>
<keyword id="KW-0324">Glycolysis</keyword>
<keyword id="KW-0413">Isomerase</keyword>
<keyword id="KW-1185">Reference proteome</keyword>
<feature type="chain" id="PRO_0000180637" description="Glucose-6-phosphate isomerase">
    <location>
        <begin position="1"/>
        <end position="541"/>
    </location>
</feature>
<feature type="active site" description="Proton donor" evidence="1">
    <location>
        <position position="353"/>
    </location>
</feature>
<feature type="active site" evidence="1">
    <location>
        <position position="384"/>
    </location>
</feature>
<feature type="active site" evidence="1">
    <location>
        <position position="504"/>
    </location>
</feature>
<proteinExistence type="inferred from homology"/>
<protein>
    <recommendedName>
        <fullName evidence="1">Glucose-6-phosphate isomerase</fullName>
        <shortName evidence="1">GPI</shortName>
        <ecNumber evidence="1">5.3.1.9</ecNumber>
    </recommendedName>
    <alternativeName>
        <fullName evidence="1">Phosphoglucose isomerase</fullName>
        <shortName evidence="1">PGI</shortName>
    </alternativeName>
    <alternativeName>
        <fullName evidence="1">Phosphohexose isomerase</fullName>
        <shortName evidence="1">PHI</shortName>
    </alternativeName>
</protein>
<dbReference type="EC" id="5.3.1.9" evidence="1"/>
<dbReference type="EMBL" id="AE000513">
    <property type="protein sequence ID" value="AAF11299.1"/>
    <property type="molecule type" value="Genomic_DNA"/>
</dbReference>
<dbReference type="PIR" id="C75358">
    <property type="entry name" value="C75358"/>
</dbReference>
<dbReference type="RefSeq" id="NP_295465.1">
    <property type="nucleotide sequence ID" value="NC_001263.1"/>
</dbReference>
<dbReference type="RefSeq" id="WP_010888377.1">
    <property type="nucleotide sequence ID" value="NC_001263.1"/>
</dbReference>
<dbReference type="SMR" id="Q9RTL8"/>
<dbReference type="FunCoup" id="Q9RTL8">
    <property type="interactions" value="400"/>
</dbReference>
<dbReference type="STRING" id="243230.DR_1742"/>
<dbReference type="PaxDb" id="243230-DR_1742"/>
<dbReference type="EnsemblBacteria" id="AAF11299">
    <property type="protein sequence ID" value="AAF11299"/>
    <property type="gene ID" value="DR_1742"/>
</dbReference>
<dbReference type="GeneID" id="69517980"/>
<dbReference type="KEGG" id="dra:DR_1742"/>
<dbReference type="PATRIC" id="fig|243230.17.peg.1952"/>
<dbReference type="eggNOG" id="COG0166">
    <property type="taxonomic scope" value="Bacteria"/>
</dbReference>
<dbReference type="HOGENOM" id="CLU_017947_3_1_0"/>
<dbReference type="InParanoid" id="Q9RTL8"/>
<dbReference type="OrthoDB" id="140919at2"/>
<dbReference type="UniPathway" id="UPA00109">
    <property type="reaction ID" value="UER00181"/>
</dbReference>
<dbReference type="UniPathway" id="UPA00138"/>
<dbReference type="Proteomes" id="UP000002524">
    <property type="component" value="Chromosome 1"/>
</dbReference>
<dbReference type="GO" id="GO:0005829">
    <property type="term" value="C:cytosol"/>
    <property type="evidence" value="ECO:0000318"/>
    <property type="project" value="GO_Central"/>
</dbReference>
<dbReference type="GO" id="GO:0097367">
    <property type="term" value="F:carbohydrate derivative binding"/>
    <property type="evidence" value="ECO:0007669"/>
    <property type="project" value="InterPro"/>
</dbReference>
<dbReference type="GO" id="GO:0004347">
    <property type="term" value="F:glucose-6-phosphate isomerase activity"/>
    <property type="evidence" value="ECO:0000318"/>
    <property type="project" value="GO_Central"/>
</dbReference>
<dbReference type="GO" id="GO:0048029">
    <property type="term" value="F:monosaccharide binding"/>
    <property type="evidence" value="ECO:0000318"/>
    <property type="project" value="GO_Central"/>
</dbReference>
<dbReference type="GO" id="GO:0006094">
    <property type="term" value="P:gluconeogenesis"/>
    <property type="evidence" value="ECO:0000318"/>
    <property type="project" value="GO_Central"/>
</dbReference>
<dbReference type="GO" id="GO:0051156">
    <property type="term" value="P:glucose 6-phosphate metabolic process"/>
    <property type="evidence" value="ECO:0000318"/>
    <property type="project" value="GO_Central"/>
</dbReference>
<dbReference type="GO" id="GO:0006096">
    <property type="term" value="P:glycolytic process"/>
    <property type="evidence" value="ECO:0000318"/>
    <property type="project" value="GO_Central"/>
</dbReference>
<dbReference type="CDD" id="cd05015">
    <property type="entry name" value="SIS_PGI_1"/>
    <property type="match status" value="1"/>
</dbReference>
<dbReference type="CDD" id="cd05016">
    <property type="entry name" value="SIS_PGI_2"/>
    <property type="match status" value="1"/>
</dbReference>
<dbReference type="FunFam" id="1.10.1390.10:FF:000001">
    <property type="entry name" value="Glucose-6-phosphate isomerase"/>
    <property type="match status" value="1"/>
</dbReference>
<dbReference type="FunFam" id="3.40.50.10490:FF:000018">
    <property type="entry name" value="Glucose-6-phosphate isomerase"/>
    <property type="match status" value="1"/>
</dbReference>
<dbReference type="Gene3D" id="1.10.1390.10">
    <property type="match status" value="1"/>
</dbReference>
<dbReference type="Gene3D" id="3.40.50.10490">
    <property type="entry name" value="Glucose-6-phosphate isomerase like protein, domain 1"/>
    <property type="match status" value="2"/>
</dbReference>
<dbReference type="HAMAP" id="MF_00473">
    <property type="entry name" value="G6P_isomerase"/>
    <property type="match status" value="1"/>
</dbReference>
<dbReference type="InterPro" id="IPR001672">
    <property type="entry name" value="G6P_Isomerase"/>
</dbReference>
<dbReference type="InterPro" id="IPR023096">
    <property type="entry name" value="G6P_Isomerase_C"/>
</dbReference>
<dbReference type="InterPro" id="IPR018189">
    <property type="entry name" value="Phosphoglucose_isomerase_CS"/>
</dbReference>
<dbReference type="InterPro" id="IPR046348">
    <property type="entry name" value="SIS_dom_sf"/>
</dbReference>
<dbReference type="InterPro" id="IPR035476">
    <property type="entry name" value="SIS_PGI_1"/>
</dbReference>
<dbReference type="InterPro" id="IPR035482">
    <property type="entry name" value="SIS_PGI_2"/>
</dbReference>
<dbReference type="NCBIfam" id="NF001211">
    <property type="entry name" value="PRK00179.1"/>
    <property type="match status" value="1"/>
</dbReference>
<dbReference type="PANTHER" id="PTHR11469">
    <property type="entry name" value="GLUCOSE-6-PHOSPHATE ISOMERASE"/>
    <property type="match status" value="1"/>
</dbReference>
<dbReference type="PANTHER" id="PTHR11469:SF1">
    <property type="entry name" value="GLUCOSE-6-PHOSPHATE ISOMERASE"/>
    <property type="match status" value="1"/>
</dbReference>
<dbReference type="Pfam" id="PF00342">
    <property type="entry name" value="PGI"/>
    <property type="match status" value="1"/>
</dbReference>
<dbReference type="PRINTS" id="PR00662">
    <property type="entry name" value="G6PISOMERASE"/>
</dbReference>
<dbReference type="SUPFAM" id="SSF53697">
    <property type="entry name" value="SIS domain"/>
    <property type="match status" value="1"/>
</dbReference>
<dbReference type="PROSITE" id="PS00765">
    <property type="entry name" value="P_GLUCOSE_ISOMERASE_1"/>
    <property type="match status" value="1"/>
</dbReference>
<dbReference type="PROSITE" id="PS00174">
    <property type="entry name" value="P_GLUCOSE_ISOMERASE_2"/>
    <property type="match status" value="1"/>
</dbReference>
<dbReference type="PROSITE" id="PS51463">
    <property type="entry name" value="P_GLUCOSE_ISOMERASE_3"/>
    <property type="match status" value="1"/>
</dbReference>
<comment type="function">
    <text evidence="1">Catalyzes the reversible isomerization of glucose-6-phosphate to fructose-6-phosphate.</text>
</comment>
<comment type="catalytic activity">
    <reaction evidence="1">
        <text>alpha-D-glucose 6-phosphate = beta-D-fructose 6-phosphate</text>
        <dbReference type="Rhea" id="RHEA:11816"/>
        <dbReference type="ChEBI" id="CHEBI:57634"/>
        <dbReference type="ChEBI" id="CHEBI:58225"/>
        <dbReference type="EC" id="5.3.1.9"/>
    </reaction>
</comment>
<comment type="pathway">
    <text evidence="1">Carbohydrate biosynthesis; gluconeogenesis.</text>
</comment>
<comment type="pathway">
    <text evidence="1">Carbohydrate degradation; glycolysis; D-glyceraldehyde 3-phosphate and glycerone phosphate from D-glucose: step 2/4.</text>
</comment>
<comment type="subcellular location">
    <subcellularLocation>
        <location evidence="1">Cytoplasm</location>
    </subcellularLocation>
</comment>
<comment type="similarity">
    <text evidence="1 2">Belongs to the GPI family.</text>
</comment>
<reference key="1">
    <citation type="journal article" date="1999" name="Science">
        <title>Genome sequence of the radioresistant bacterium Deinococcus radiodurans R1.</title>
        <authorList>
            <person name="White O."/>
            <person name="Eisen J.A."/>
            <person name="Heidelberg J.F."/>
            <person name="Hickey E.K."/>
            <person name="Peterson J.D."/>
            <person name="Dodson R.J."/>
            <person name="Haft D.H."/>
            <person name="Gwinn M.L."/>
            <person name="Nelson W.C."/>
            <person name="Richardson D.L."/>
            <person name="Moffat K.S."/>
            <person name="Qin H."/>
            <person name="Jiang L."/>
            <person name="Pamphile W."/>
            <person name="Crosby M."/>
            <person name="Shen M."/>
            <person name="Vamathevan J.J."/>
            <person name="Lam P."/>
            <person name="McDonald L.A."/>
            <person name="Utterback T.R."/>
            <person name="Zalewski C."/>
            <person name="Makarova K.S."/>
            <person name="Aravind L."/>
            <person name="Daly M.J."/>
            <person name="Minton K.W."/>
            <person name="Fleischmann R.D."/>
            <person name="Ketchum K.A."/>
            <person name="Nelson K.E."/>
            <person name="Salzberg S.L."/>
            <person name="Smith H.O."/>
            <person name="Venter J.C."/>
            <person name="Fraser C.M."/>
        </authorList>
    </citation>
    <scope>NUCLEOTIDE SEQUENCE [LARGE SCALE GENOMIC DNA]</scope>
    <source>
        <strain>ATCC 13939 / DSM 20539 / JCM 16871 / CCUG 27074 / LMG 4051 / NBRC 15346 / NCIMB 9279 / VKM B-1422 / R1</strain>
    </source>
</reference>
<accession>Q9RTL8</accession>
<name>G6PI_DEIRA</name>
<sequence>MSRLTDLPAWQALEDHYYELQGTHLRELFAADPERGEKMNAEGAGLYLDYSKHRVTDETLRLLRELAQATGVEARRDAMFRGEKINVTEGRAVLHTALRAPRDAVIEVDGKNVVPEVHEVLDRMATFADAVRSGEWLGYTGKPIKNIVNIGIGGSDLGPVMAYEALKHYAQRDLTVRFVSNVDGTDLTEKTRDLDPEVTLFIVSSKTFTTQETMTNARSARKWLLGSLKDDAAVTRHFVAVSTNAEEVQKFGIDTANMFGFWDWVGGRYSMDSAIGLSLMVAVGPEHFREMLAGFHDMDEHFRTAPAEQNLPMLMGLLGVWYGDFFGAESLAVLPYDQYLASFPAYLQQLDMESNGKHVTLGGEPVDYQTGPIVWGQAGTNGQHAFYQLIHQGTKLIPCDFIGFCQTLNPLPPHHDLLMANVFAQTEALAFGKTLEQVLADGVAPEVAPHRVFEGNRPTSTILADRLTPRTLGALIALYEHKVFVQGAVWDINSFDQWGVELGKVLAKKIDGELQSEGEPELQHDSSTNALIRRYRARRQG</sequence>
<gene>
    <name evidence="1" type="primary">pgi</name>
    <name type="ordered locus">DR_1742</name>
</gene>
<organism>
    <name type="scientific">Deinococcus radiodurans (strain ATCC 13939 / DSM 20539 / JCM 16871 / CCUG 27074 / LMG 4051 / NBRC 15346 / NCIMB 9279 / VKM B-1422 / R1)</name>
    <dbReference type="NCBI Taxonomy" id="243230"/>
    <lineage>
        <taxon>Bacteria</taxon>
        <taxon>Thermotogati</taxon>
        <taxon>Deinococcota</taxon>
        <taxon>Deinococci</taxon>
        <taxon>Deinococcales</taxon>
        <taxon>Deinococcaceae</taxon>
        <taxon>Deinococcus</taxon>
    </lineage>
</organism>
<evidence type="ECO:0000255" key="1">
    <source>
        <dbReference type="HAMAP-Rule" id="MF_00473"/>
    </source>
</evidence>
<evidence type="ECO:0000305" key="2"/>